<evidence type="ECO:0000255" key="1">
    <source>
        <dbReference type="HAMAP-Rule" id="MF_01657"/>
    </source>
</evidence>
<proteinExistence type="inferred from homology"/>
<dbReference type="EC" id="1.2.1.10" evidence="1"/>
<dbReference type="EMBL" id="CP000520">
    <property type="protein sequence ID" value="ABL95008.1"/>
    <property type="molecule type" value="Genomic_DNA"/>
</dbReference>
<dbReference type="SMR" id="A1UQA0"/>
<dbReference type="KEGG" id="mkm:Mkms_5834"/>
<dbReference type="HOGENOM" id="CLU_062208_0_0_11"/>
<dbReference type="OrthoDB" id="9786743at2"/>
<dbReference type="GO" id="GO:0008774">
    <property type="term" value="F:acetaldehyde dehydrogenase (acetylating) activity"/>
    <property type="evidence" value="ECO:0007669"/>
    <property type="project" value="UniProtKB-UniRule"/>
</dbReference>
<dbReference type="GO" id="GO:0051287">
    <property type="term" value="F:NAD binding"/>
    <property type="evidence" value="ECO:0007669"/>
    <property type="project" value="UniProtKB-UniRule"/>
</dbReference>
<dbReference type="GO" id="GO:0009056">
    <property type="term" value="P:catabolic process"/>
    <property type="evidence" value="ECO:0007669"/>
    <property type="project" value="UniProtKB-KW"/>
</dbReference>
<dbReference type="CDD" id="cd23933">
    <property type="entry name" value="ALDH_C"/>
    <property type="match status" value="1"/>
</dbReference>
<dbReference type="Gene3D" id="3.30.360.10">
    <property type="entry name" value="Dihydrodipicolinate Reductase, domain 2"/>
    <property type="match status" value="1"/>
</dbReference>
<dbReference type="Gene3D" id="3.40.50.720">
    <property type="entry name" value="NAD(P)-binding Rossmann-like Domain"/>
    <property type="match status" value="1"/>
</dbReference>
<dbReference type="HAMAP" id="MF_01657">
    <property type="entry name" value="Ac_ald_DH_ac"/>
    <property type="match status" value="1"/>
</dbReference>
<dbReference type="InterPro" id="IPR003361">
    <property type="entry name" value="Acetaldehyde_dehydrogenase"/>
</dbReference>
<dbReference type="InterPro" id="IPR015426">
    <property type="entry name" value="Acetylaldehyde_DH_C"/>
</dbReference>
<dbReference type="InterPro" id="IPR036291">
    <property type="entry name" value="NAD(P)-bd_dom_sf"/>
</dbReference>
<dbReference type="InterPro" id="IPR000534">
    <property type="entry name" value="Semialdehyde_DH_NAD-bd"/>
</dbReference>
<dbReference type="NCBIfam" id="TIGR03215">
    <property type="entry name" value="ac_ald_DH_ac"/>
    <property type="match status" value="1"/>
</dbReference>
<dbReference type="NCBIfam" id="NF006157">
    <property type="entry name" value="PRK08300.1"/>
    <property type="match status" value="1"/>
</dbReference>
<dbReference type="Pfam" id="PF09290">
    <property type="entry name" value="AcetDehyd-dimer"/>
    <property type="match status" value="1"/>
</dbReference>
<dbReference type="Pfam" id="PF01118">
    <property type="entry name" value="Semialdhyde_dh"/>
    <property type="match status" value="1"/>
</dbReference>
<dbReference type="PIRSF" id="PIRSF015689">
    <property type="entry name" value="Actaldh_dh_actl"/>
    <property type="match status" value="1"/>
</dbReference>
<dbReference type="SMART" id="SM00859">
    <property type="entry name" value="Semialdhyde_dh"/>
    <property type="match status" value="1"/>
</dbReference>
<dbReference type="SUPFAM" id="SSF55347">
    <property type="entry name" value="Glyceraldehyde-3-phosphate dehydrogenase-like, C-terminal domain"/>
    <property type="match status" value="1"/>
</dbReference>
<dbReference type="SUPFAM" id="SSF51735">
    <property type="entry name" value="NAD(P)-binding Rossmann-fold domains"/>
    <property type="match status" value="1"/>
</dbReference>
<gene>
    <name type="ordered locus">Mkms_5834</name>
</gene>
<sequence length="315" mass="32996">MSHSKVAVIGSGNIGTDLVVKLKKLATNVEIAVLVGIDPSSDGLARARRMGIGTVDTGVQGLIEHAEFDEIDIIFDSTSAKAHLVNEEALRTFGKRLIDLTPAAVGPYVVPAVNLDDHLGAPNVNMVTCGGQATIPIVAAISSVTAVHYAEIVASIASKSAGPGTRSNIDEFTQTTSAAIEKVGGAAHGKAIIVLNPAEPPLIMRDTVLALVTDPDQNRIRQSVIDMVEKVSAYVPGYRLKQEVQFTQLDDAESVATLTGGVDKGPGLWKVAVFLEVEGAAHYLPAYAGNLDIMTSAALQVAERIAANTVQEATR</sequence>
<comment type="catalytic activity">
    <reaction evidence="1">
        <text>acetaldehyde + NAD(+) + CoA = acetyl-CoA + NADH + H(+)</text>
        <dbReference type="Rhea" id="RHEA:23288"/>
        <dbReference type="ChEBI" id="CHEBI:15343"/>
        <dbReference type="ChEBI" id="CHEBI:15378"/>
        <dbReference type="ChEBI" id="CHEBI:57287"/>
        <dbReference type="ChEBI" id="CHEBI:57288"/>
        <dbReference type="ChEBI" id="CHEBI:57540"/>
        <dbReference type="ChEBI" id="CHEBI:57945"/>
        <dbReference type="EC" id="1.2.1.10"/>
    </reaction>
</comment>
<comment type="similarity">
    <text evidence="1">Belongs to the acetaldehyde dehydrogenase family.</text>
</comment>
<keyword id="KW-0058">Aromatic hydrocarbons catabolism</keyword>
<keyword id="KW-0520">NAD</keyword>
<keyword id="KW-0560">Oxidoreductase</keyword>
<keyword id="KW-0614">Plasmid</keyword>
<reference key="1">
    <citation type="submission" date="2006-12" db="EMBL/GenBank/DDBJ databases">
        <title>Complete sequence of plasmid pMKMS02 of Mycobacterium sp. KMS.</title>
        <authorList>
            <consortium name="US DOE Joint Genome Institute"/>
            <person name="Copeland A."/>
            <person name="Lucas S."/>
            <person name="Lapidus A."/>
            <person name="Barry K."/>
            <person name="Detter J.C."/>
            <person name="Glavina del Rio T."/>
            <person name="Hammon N."/>
            <person name="Israni S."/>
            <person name="Dalin E."/>
            <person name="Tice H."/>
            <person name="Pitluck S."/>
            <person name="Kiss H."/>
            <person name="Brettin T."/>
            <person name="Bruce D."/>
            <person name="Han C."/>
            <person name="Tapia R."/>
            <person name="Gilna P."/>
            <person name="Schmutz J."/>
            <person name="Larimer F."/>
            <person name="Land M."/>
            <person name="Hauser L."/>
            <person name="Kyrpides N."/>
            <person name="Mikhailova N."/>
            <person name="Miller C.D."/>
            <person name="Richardson P."/>
        </authorList>
    </citation>
    <scope>NUCLEOTIDE SEQUENCE [LARGE SCALE GENOMIC DNA]</scope>
    <source>
        <strain>KMS</strain>
    </source>
</reference>
<geneLocation type="plasmid">
    <name>pMKMS02</name>
</geneLocation>
<feature type="chain" id="PRO_0000387685" description="Acetaldehyde dehydrogenase 2">
    <location>
        <begin position="1"/>
        <end position="315"/>
    </location>
</feature>
<feature type="active site" description="Acyl-thioester intermediate" evidence="1">
    <location>
        <position position="129"/>
    </location>
</feature>
<feature type="binding site" evidence="1">
    <location>
        <begin position="11"/>
        <end position="14"/>
    </location>
    <ligand>
        <name>NAD(+)</name>
        <dbReference type="ChEBI" id="CHEBI:57540"/>
    </ligand>
</feature>
<feature type="binding site" evidence="1">
    <location>
        <begin position="160"/>
        <end position="168"/>
    </location>
    <ligand>
        <name>NAD(+)</name>
        <dbReference type="ChEBI" id="CHEBI:57540"/>
    </ligand>
</feature>
<feature type="binding site" evidence="1">
    <location>
        <position position="290"/>
    </location>
    <ligand>
        <name>NAD(+)</name>
        <dbReference type="ChEBI" id="CHEBI:57540"/>
    </ligand>
</feature>
<protein>
    <recommendedName>
        <fullName evidence="1">Acetaldehyde dehydrogenase 2</fullName>
        <ecNumber evidence="1">1.2.1.10</ecNumber>
    </recommendedName>
    <alternativeName>
        <fullName evidence="1">Acetaldehyde dehydrogenase [acetylating] 2</fullName>
    </alternativeName>
</protein>
<name>ACDH2_MYCSK</name>
<accession>A1UQA0</accession>
<organism>
    <name type="scientific">Mycobacterium sp. (strain KMS)</name>
    <dbReference type="NCBI Taxonomy" id="189918"/>
    <lineage>
        <taxon>Bacteria</taxon>
        <taxon>Bacillati</taxon>
        <taxon>Actinomycetota</taxon>
        <taxon>Actinomycetes</taxon>
        <taxon>Mycobacteriales</taxon>
        <taxon>Mycobacteriaceae</taxon>
        <taxon>Mycobacterium</taxon>
    </lineage>
</organism>